<sequence>MAGRNAINKPKIKLHAQSHAKSLGRKRAARRTTATRSSTSRYAAKGTTAPRPTDSKAVALYTGNAPQPTSTMTTQTLSNKRAKKIARNQRYLAANKLKENETAMEVDNTSEQEKQTKLDQIKKALWSVIENHQKNGYSVVSDPEGTTLGIQSF</sequence>
<feature type="chain" id="PRO_0000333326" description="Ribosome biogenesis protein ALB1">
    <location>
        <begin position="1"/>
        <end position="153"/>
    </location>
</feature>
<feature type="region of interest" description="Disordered" evidence="2">
    <location>
        <begin position="1"/>
        <end position="55"/>
    </location>
</feature>
<feature type="compositionally biased region" description="Basic residues" evidence="2">
    <location>
        <begin position="10"/>
        <end position="30"/>
    </location>
</feature>
<feature type="compositionally biased region" description="Low complexity" evidence="2">
    <location>
        <begin position="31"/>
        <end position="44"/>
    </location>
</feature>
<comment type="function">
    <text evidence="1">Involved in proper assembly of pre-ribosomal particles during the biogenesis of the 60S ribosomal subunit. Accompanies the pre-60S particles to the cytoplasm (By similarity).</text>
</comment>
<comment type="subunit">
    <text evidence="1">Component of the nucleoplasmic and cytoplasmic pre-60S ribosomal particles.</text>
</comment>
<comment type="subcellular location">
    <subcellularLocation>
        <location evidence="1">Cytoplasm</location>
    </subcellularLocation>
    <subcellularLocation>
        <location evidence="1">Nucleus</location>
    </subcellularLocation>
</comment>
<comment type="similarity">
    <text evidence="3">Belongs to the ALB1 family.</text>
</comment>
<name>ALB1_CANAL</name>
<gene>
    <name type="primary">ALB1</name>
    <name type="ordered locus">CAALFM_C700160CA</name>
    <name type="ORF">CaJ7.0023</name>
    <name type="ORF">CaO19.7107</name>
</gene>
<evidence type="ECO:0000250" key="1"/>
<evidence type="ECO:0000256" key="2">
    <source>
        <dbReference type="SAM" id="MobiDB-lite"/>
    </source>
</evidence>
<evidence type="ECO:0000305" key="3"/>
<protein>
    <recommendedName>
        <fullName>Ribosome biogenesis protein ALB1</fullName>
    </recommendedName>
</protein>
<proteinExistence type="inferred from homology"/>
<organism>
    <name type="scientific">Candida albicans (strain SC5314 / ATCC MYA-2876)</name>
    <name type="common">Yeast</name>
    <dbReference type="NCBI Taxonomy" id="237561"/>
    <lineage>
        <taxon>Eukaryota</taxon>
        <taxon>Fungi</taxon>
        <taxon>Dikarya</taxon>
        <taxon>Ascomycota</taxon>
        <taxon>Saccharomycotina</taxon>
        <taxon>Pichiomycetes</taxon>
        <taxon>Debaryomycetaceae</taxon>
        <taxon>Candida/Lodderomyces clade</taxon>
        <taxon>Candida</taxon>
    </lineage>
</organism>
<dbReference type="EMBL" id="AP006852">
    <property type="protein sequence ID" value="BAE44547.1"/>
    <property type="molecule type" value="Genomic_DNA"/>
</dbReference>
<dbReference type="EMBL" id="CP017629">
    <property type="protein sequence ID" value="AOW30395.1"/>
    <property type="molecule type" value="Genomic_DNA"/>
</dbReference>
<dbReference type="RefSeq" id="XP_720398.1">
    <property type="nucleotide sequence ID" value="XM_715305.1"/>
</dbReference>
<dbReference type="SMR" id="Q5AFG1"/>
<dbReference type="FunCoup" id="Q5AFG1">
    <property type="interactions" value="249"/>
</dbReference>
<dbReference type="STRING" id="237561.Q5AFG1"/>
<dbReference type="EnsemblFungi" id="C7_00160C_A-T">
    <property type="protein sequence ID" value="C7_00160C_A-T-p1"/>
    <property type="gene ID" value="C7_00160C_A"/>
</dbReference>
<dbReference type="GeneID" id="3637972"/>
<dbReference type="KEGG" id="cal:CAALFM_C700160CA"/>
<dbReference type="CGD" id="CAL0000182219">
    <property type="gene designation" value="orf19.7107"/>
</dbReference>
<dbReference type="VEuPathDB" id="FungiDB:C7_00160C_A"/>
<dbReference type="eggNOG" id="ENOG502S14D">
    <property type="taxonomic scope" value="Eukaryota"/>
</dbReference>
<dbReference type="HOGENOM" id="CLU_103824_0_0_1"/>
<dbReference type="InParanoid" id="Q5AFG1"/>
<dbReference type="OMA" id="HHKVHSL"/>
<dbReference type="OrthoDB" id="4086742at2759"/>
<dbReference type="Proteomes" id="UP000000559">
    <property type="component" value="Chromosome 7"/>
</dbReference>
<dbReference type="GO" id="GO:0005737">
    <property type="term" value="C:cytoplasm"/>
    <property type="evidence" value="ECO:0007669"/>
    <property type="project" value="UniProtKB-SubCell"/>
</dbReference>
<dbReference type="GO" id="GO:0005634">
    <property type="term" value="C:nucleus"/>
    <property type="evidence" value="ECO:0007669"/>
    <property type="project" value="UniProtKB-SubCell"/>
</dbReference>
<dbReference type="GO" id="GO:0042254">
    <property type="term" value="P:ribosome biogenesis"/>
    <property type="evidence" value="ECO:0007669"/>
    <property type="project" value="UniProtKB-KW"/>
</dbReference>
<dbReference type="InterPro" id="IPR022784">
    <property type="entry name" value="Ribosome_bgen_Alb1"/>
</dbReference>
<dbReference type="Pfam" id="PF09135">
    <property type="entry name" value="Alb1"/>
    <property type="match status" value="1"/>
</dbReference>
<keyword id="KW-0963">Cytoplasm</keyword>
<keyword id="KW-0539">Nucleus</keyword>
<keyword id="KW-1185">Reference proteome</keyword>
<keyword id="KW-0690">Ribosome biogenesis</keyword>
<keyword id="KW-0813">Transport</keyword>
<reference key="1">
    <citation type="journal article" date="2005" name="Genetics">
        <title>Sequence finishing and gene mapping for Candida albicans chromosome 7 and syntenic analysis against the Saccharomyces cerevisiae genome.</title>
        <authorList>
            <person name="Chibana H."/>
            <person name="Oka N."/>
            <person name="Nakayama H."/>
            <person name="Aoyama T."/>
            <person name="Magee B.B."/>
            <person name="Magee P.T."/>
            <person name="Mikami Y."/>
        </authorList>
    </citation>
    <scope>NUCLEOTIDE SEQUENCE [LARGE SCALE GENOMIC DNA]</scope>
    <source>
        <strain>SC5314 / ATCC MYA-2876</strain>
    </source>
</reference>
<reference key="2">
    <citation type="journal article" date="2004" name="Proc. Natl. Acad. Sci. U.S.A.">
        <title>The diploid genome sequence of Candida albicans.</title>
        <authorList>
            <person name="Jones T."/>
            <person name="Federspiel N.A."/>
            <person name="Chibana H."/>
            <person name="Dungan J."/>
            <person name="Kalman S."/>
            <person name="Magee B.B."/>
            <person name="Newport G."/>
            <person name="Thorstenson Y.R."/>
            <person name="Agabian N."/>
            <person name="Magee P.T."/>
            <person name="Davis R.W."/>
            <person name="Scherer S."/>
        </authorList>
    </citation>
    <scope>NUCLEOTIDE SEQUENCE [LARGE SCALE GENOMIC DNA]</scope>
    <source>
        <strain>SC5314 / ATCC MYA-2876</strain>
    </source>
</reference>
<reference key="3">
    <citation type="journal article" date="2007" name="Genome Biol.">
        <title>Assembly of the Candida albicans genome into sixteen supercontigs aligned on the eight chromosomes.</title>
        <authorList>
            <person name="van het Hoog M."/>
            <person name="Rast T.J."/>
            <person name="Martchenko M."/>
            <person name="Grindle S."/>
            <person name="Dignard D."/>
            <person name="Hogues H."/>
            <person name="Cuomo C."/>
            <person name="Berriman M."/>
            <person name="Scherer S."/>
            <person name="Magee B.B."/>
            <person name="Whiteway M."/>
            <person name="Chibana H."/>
            <person name="Nantel A."/>
            <person name="Magee P.T."/>
        </authorList>
    </citation>
    <scope>GENOME REANNOTATION</scope>
    <source>
        <strain>SC5314 / ATCC MYA-2876</strain>
    </source>
</reference>
<reference key="4">
    <citation type="journal article" date="2013" name="Genome Biol.">
        <title>Assembly of a phased diploid Candida albicans genome facilitates allele-specific measurements and provides a simple model for repeat and indel structure.</title>
        <authorList>
            <person name="Muzzey D."/>
            <person name="Schwartz K."/>
            <person name="Weissman J.S."/>
            <person name="Sherlock G."/>
        </authorList>
    </citation>
    <scope>NUCLEOTIDE SEQUENCE [LARGE SCALE GENOMIC DNA]</scope>
    <scope>GENOME REANNOTATION</scope>
    <source>
        <strain>SC5314 / ATCC MYA-2876</strain>
    </source>
</reference>
<accession>Q5AFG1</accession>
<accession>A0A1D8PQI7</accession>
<accession>Q3MPW3</accession>